<reference key="1">
    <citation type="journal article" date="2012" name="Appl. Environ. Microbiol.">
        <title>Biosynthesis of fusarubins accounts for pigmentation of Fusarium fujikuroi perithecia.</title>
        <authorList>
            <person name="Studt L."/>
            <person name="Wiemann P."/>
            <person name="Kleigrewe K."/>
            <person name="Humpf H.U."/>
            <person name="Tudzynski B."/>
        </authorList>
    </citation>
    <scope>NUCLEOTIDE SEQUENCE [GENOMIC DNA]</scope>
    <scope>FUNCTION</scope>
    <scope>INDUCTION</scope>
    <scope>DISRUPTION PHENOTYPE</scope>
    <source>
        <strain>CBS 195.34 / IMI 58289 / NRRL A-6831</strain>
    </source>
</reference>
<reference key="2">
    <citation type="journal article" date="2013" name="PLoS Pathog.">
        <title>Deciphering the cryptic genome: genome-wide analyses of the rice pathogen Fusarium fujikuroi reveal complex regulation of secondary metabolism and novel metabolites.</title>
        <authorList>
            <person name="Wiemann P."/>
            <person name="Sieber C.M.K."/>
            <person name="von Bargen K.W."/>
            <person name="Studt L."/>
            <person name="Niehaus E.-M."/>
            <person name="Espino J.J."/>
            <person name="Huss K."/>
            <person name="Michielse C.B."/>
            <person name="Albermann S."/>
            <person name="Wagner D."/>
            <person name="Bergner S.V."/>
            <person name="Connolly L.R."/>
            <person name="Fischer A."/>
            <person name="Reuter G."/>
            <person name="Kleigrewe K."/>
            <person name="Bald T."/>
            <person name="Wingfield B.D."/>
            <person name="Ophir R."/>
            <person name="Freeman S."/>
            <person name="Hippler M."/>
            <person name="Smith K.M."/>
            <person name="Brown D.W."/>
            <person name="Proctor R.H."/>
            <person name="Muensterkoetter M."/>
            <person name="Freitag M."/>
            <person name="Humpf H.-U."/>
            <person name="Gueldener U."/>
            <person name="Tudzynski B."/>
        </authorList>
    </citation>
    <scope>NUCLEOTIDE SEQUENCE [LARGE SCALE GENOMIC DNA]</scope>
    <scope>FUNCTION</scope>
    <source>
        <strain>CBS 195.34 / IMI 58289 / NRRL A-6831</strain>
    </source>
</reference>
<dbReference type="EC" id="1.1.-.-" evidence="9"/>
<dbReference type="EMBL" id="HE613440">
    <property type="protein sequence ID" value="CCE67074.1"/>
    <property type="status" value="ALT_SEQ"/>
    <property type="molecule type" value="Genomic_DNA"/>
</dbReference>
<dbReference type="EMBL" id="HF679024">
    <property type="protein sequence ID" value="CCT65046.1"/>
    <property type="molecule type" value="Genomic_DNA"/>
</dbReference>
<dbReference type="RefSeq" id="XP_023427127.1">
    <property type="nucleotide sequence ID" value="XM_023572779.1"/>
</dbReference>
<dbReference type="SMR" id="S0DRI2"/>
<dbReference type="STRING" id="1279085.S0DRI2"/>
<dbReference type="GlyCosmos" id="S0DRI2">
    <property type="glycosylation" value="3 sites, No reported glycans"/>
</dbReference>
<dbReference type="EnsemblFungi" id="CCT65046">
    <property type="protein sequence ID" value="CCT65046"/>
    <property type="gene ID" value="FFUJ_03988"/>
</dbReference>
<dbReference type="GeneID" id="35397469"/>
<dbReference type="VEuPathDB" id="FungiDB:FFUJ_03988"/>
<dbReference type="HOGENOM" id="CLU_010194_15_2_1"/>
<dbReference type="Proteomes" id="UP000016800">
    <property type="component" value="Chromosome 2"/>
</dbReference>
<dbReference type="GO" id="GO:0016491">
    <property type="term" value="F:oxidoreductase activity"/>
    <property type="evidence" value="ECO:0007669"/>
    <property type="project" value="UniProtKB-KW"/>
</dbReference>
<dbReference type="CDD" id="cd05233">
    <property type="entry name" value="SDR_c"/>
    <property type="match status" value="1"/>
</dbReference>
<dbReference type="Gene3D" id="3.40.50.720">
    <property type="entry name" value="NAD(P)-binding Rossmann-like Domain"/>
    <property type="match status" value="1"/>
</dbReference>
<dbReference type="InterPro" id="IPR036291">
    <property type="entry name" value="NAD(P)-bd_dom_sf"/>
</dbReference>
<dbReference type="InterPro" id="IPR002347">
    <property type="entry name" value="SDR_fam"/>
</dbReference>
<dbReference type="InterPro" id="IPR051122">
    <property type="entry name" value="SDR_superfamily_enzyme"/>
</dbReference>
<dbReference type="PANTHER" id="PTHR43477">
    <property type="entry name" value="DIHYDROANTICAPSIN 7-DEHYDROGENASE"/>
    <property type="match status" value="1"/>
</dbReference>
<dbReference type="PANTHER" id="PTHR43477:SF1">
    <property type="entry name" value="DIHYDROANTICAPSIN 7-DEHYDROGENASE"/>
    <property type="match status" value="1"/>
</dbReference>
<dbReference type="Pfam" id="PF23441">
    <property type="entry name" value="SDR"/>
    <property type="match status" value="1"/>
</dbReference>
<dbReference type="PRINTS" id="PR00081">
    <property type="entry name" value="GDHRDH"/>
</dbReference>
<dbReference type="SUPFAM" id="SSF51735">
    <property type="entry name" value="NAD(P)-binding Rossmann-fold domains"/>
    <property type="match status" value="1"/>
</dbReference>
<evidence type="ECO:0000250" key="1">
    <source>
        <dbReference type="UniProtKB" id="L0E2Z4"/>
    </source>
</evidence>
<evidence type="ECO:0000250" key="2">
    <source>
        <dbReference type="UniProtKB" id="O93868"/>
    </source>
</evidence>
<evidence type="ECO:0000255" key="3"/>
<evidence type="ECO:0000255" key="4">
    <source>
        <dbReference type="PROSITE-ProRule" id="PRU00498"/>
    </source>
</evidence>
<evidence type="ECO:0000269" key="5">
    <source>
    </source>
</evidence>
<evidence type="ECO:0000269" key="6">
    <source>
    </source>
</evidence>
<evidence type="ECO:0000303" key="7">
    <source>
    </source>
</evidence>
<evidence type="ECO:0000305" key="8"/>
<evidence type="ECO:0000305" key="9">
    <source>
    </source>
</evidence>
<protein>
    <recommendedName>
        <fullName evidence="7">Short-chain dehydrogenase/reductase fsr5</fullName>
        <ecNumber evidence="9">1.1.-.-</ecNumber>
    </recommendedName>
    <alternativeName>
        <fullName evidence="7">Fusarubin biosynthesis cluster protein 35</fullName>
    </alternativeName>
</protein>
<name>FSR5_GIBF5</name>
<organism>
    <name type="scientific">Gibberella fujikuroi (strain CBS 195.34 / IMI 58289 / NRRL A-6831)</name>
    <name type="common">Bakanae and foot rot disease fungus</name>
    <name type="synonym">Fusarium fujikuroi</name>
    <dbReference type="NCBI Taxonomy" id="1279085"/>
    <lineage>
        <taxon>Eukaryota</taxon>
        <taxon>Fungi</taxon>
        <taxon>Dikarya</taxon>
        <taxon>Ascomycota</taxon>
        <taxon>Pezizomycotina</taxon>
        <taxon>Sordariomycetes</taxon>
        <taxon>Hypocreomycetidae</taxon>
        <taxon>Hypocreales</taxon>
        <taxon>Nectriaceae</taxon>
        <taxon>Fusarium</taxon>
        <taxon>Fusarium fujikuroi species complex</taxon>
    </lineage>
</organism>
<keyword id="KW-0325">Glycoprotein</keyword>
<keyword id="KW-0521">NADP</keyword>
<keyword id="KW-0560">Oxidoreductase</keyword>
<keyword id="KW-1185">Reference proteome</keyword>
<keyword id="KW-0732">Signal</keyword>
<accession>S0DRI2</accession>
<accession>G8C423</accession>
<proteinExistence type="evidence at transcript level"/>
<gene>
    <name evidence="7" type="primary">fsr5</name>
    <name type="ORF">FFUJ_03988</name>
</gene>
<comment type="function">
    <text evidence="5 6">Short-chain dehydrogenase/reductase; part of the gene cluster that mediates the biosynthesis of fusarubins, highly pigmented naphthoquinones responsible for the coloration of the fruiting bodies (PubMed:22492438, PubMed:23825955). The non-reducing polyketide synthase FSR1 is responsible for the condensation of seven acetyl-CoA units to yield a haptaketide (PubMed:22492438). After rings A and B are formed by aldol-type cyclization, the PKS-derived product is released as 6-O-demethylfusarubinaldehyde (PubMed:22492438). Then, two hydroxyl groups at C-5 and C-10 are incorporated by FSR3, and simultaneously hydroxyl groups at C-6 and C-8 are methylated by FSR2 (PubMed:22492438). The aldehyde is, on the one hand, reduced by FSR3 to 8-O-methylfusarubin alcohol, which equilibrates mainly with 8-O-methylfusarubin and only small amounts of 8-O-methylnectriafurone (PubMed:22492438). On the other hand, the aldehyde can be oxidized to form 8-O-methylfusarubinic acid, a reaction driven by FSR3 equilibrating with 8-O-methylfusarubinlactone, finally resulting in 8-O-methylanhydrofusarubinlactol after a further reduction step and loss of water (PubMed:22492438). 8-O-Methylfusarubinic acid can also undergo decarboxylation, resulting in 8-O-methyl-13-hydroxynorjavanicin after another hydroxylation step at C-13 (PubMed:22492438). Both steps are most likely also accomplished by FSR3 (PubMed:22492438). No enzymatic function has been determined so far for either FSR4 and FSR5 (PubMed:22492438). Their deletion does not alter the product spectrum, but the possibility that they catalyze specific enzymatic steps during perithecium development cannot be ruled out (PubMed:22492438). FSR4 might possess a regulatory function in the biosynthesis of fusarubins (PubMed:22492438).</text>
</comment>
<comment type="induction">
    <text evidence="5">Expression is induced in presence of sodium nitrate, and repressed by glutamine (PubMed:22492438).</text>
</comment>
<comment type="disruption phenotype">
    <text evidence="5">Does nor affect the production of the fusarubins (PubMed:22492438).</text>
</comment>
<comment type="similarity">
    <text evidence="8">Belongs to the short-chain dehydrogenases/reductases (SDR) family.</text>
</comment>
<comment type="sequence caution" evidence="8">
    <conflict type="erroneous gene model prediction">
        <sequence resource="EMBL-CDS" id="CCE67074"/>
    </conflict>
</comment>
<feature type="signal peptide" evidence="3">
    <location>
        <begin position="1"/>
        <end position="32"/>
    </location>
</feature>
<feature type="chain" id="PRO_0000442028" description="Short-chain dehydrogenase/reductase fsr5">
    <location>
        <begin position="33"/>
        <end position="265"/>
    </location>
</feature>
<feature type="binding site" evidence="1">
    <location>
        <position position="22"/>
    </location>
    <ligand>
        <name>NADP(+)</name>
        <dbReference type="ChEBI" id="CHEBI:58349"/>
    </ligand>
</feature>
<feature type="binding site" evidence="1">
    <location>
        <position position="23"/>
    </location>
    <ligand>
        <name>NADP(+)</name>
        <dbReference type="ChEBI" id="CHEBI:58349"/>
    </ligand>
</feature>
<feature type="binding site" evidence="1">
    <location>
        <position position="25"/>
    </location>
    <ligand>
        <name>NADP(+)</name>
        <dbReference type="ChEBI" id="CHEBI:58349"/>
    </ligand>
</feature>
<feature type="binding site" evidence="1">
    <location>
        <position position="45"/>
    </location>
    <ligand>
        <name>NADP(+)</name>
        <dbReference type="ChEBI" id="CHEBI:58349"/>
    </ligand>
</feature>
<feature type="binding site" evidence="1">
    <location>
        <position position="50"/>
    </location>
    <ligand>
        <name>NADP(+)</name>
        <dbReference type="ChEBI" id="CHEBI:58349"/>
    </ligand>
</feature>
<feature type="binding site" evidence="2">
    <location>
        <position position="88"/>
    </location>
    <ligand>
        <name>NADP(+)</name>
        <dbReference type="ChEBI" id="CHEBI:58349"/>
    </ligand>
</feature>
<feature type="binding site" evidence="1">
    <location>
        <position position="130"/>
    </location>
    <ligand>
        <name>NADP(+)</name>
        <dbReference type="ChEBI" id="CHEBI:58349"/>
    </ligand>
</feature>
<feature type="binding site" evidence="1">
    <location>
        <position position="204"/>
    </location>
    <ligand>
        <name>NADP(+)</name>
        <dbReference type="ChEBI" id="CHEBI:58349"/>
    </ligand>
</feature>
<feature type="glycosylation site" description="N-linked (GlcNAc...) asparagine" evidence="4">
    <location>
        <position position="62"/>
    </location>
</feature>
<feature type="glycosylation site" description="N-linked (GlcNAc...) asparagine" evidence="4">
    <location>
        <position position="218"/>
    </location>
</feature>
<feature type="glycosylation site" description="N-linked (GlcNAc...) asparagine" evidence="4">
    <location>
        <position position="250"/>
    </location>
</feature>
<sequence length="265" mass="28074">MASLGKYVSKLAGSRVLVIGGSSGIGFGVAEAAIQNGASSVFISSSSQTKISSAIERLKENNQSAKAQLHGFPCNLGSPDTLTSEVENLFAEVAKSGKLDHVVFTAGDKLAVGKLEDFTLDAIRQAGTVRFFAPLVVAQQLRKHLDESGSSSFTVATGGATEHVSKDWSIMYSYLSGLRGMIRGLAVDLAPIRVNAVAQGPTDTEIWSYVKEMGYWDNVTGHLKGRMTTGEIGKVEDVVEAYLYLMKNKNTSGSVVETTGGTLLS</sequence>